<proteinExistence type="inferred from homology"/>
<keyword id="KW-0007">Acetylation</keyword>
<keyword id="KW-0013">ADP-ribosylation</keyword>
<keyword id="KW-0025">Alternative splicing</keyword>
<keyword id="KW-0158">Chromosome</keyword>
<keyword id="KW-0238">DNA-binding</keyword>
<keyword id="KW-1017">Isopeptide bond</keyword>
<keyword id="KW-0488">Methylation</keyword>
<keyword id="KW-0539">Nucleus</keyword>
<keyword id="KW-0597">Phosphoprotein</keyword>
<keyword id="KW-0677">Repeat</keyword>
<keyword id="KW-0804">Transcription</keyword>
<keyword id="KW-0805">Transcription regulation</keyword>
<keyword id="KW-0832">Ubl conjugation</keyword>
<accession>Q9QXP3</accession>
<accession>Q9QXP2</accession>
<sequence length="107" mass="11616">MSESSSKSSQPLASKQEKDGTEKRGRGRPRKQPPVSPGTALVGSQKEPSEVPTPKRPRGRPKGSKNKGAAKTRKATTAPGRKPRGRPKKLEKEEEEGISQESSEEEQ</sequence>
<evidence type="ECO:0000250" key="1"/>
<evidence type="ECO:0000250" key="2">
    <source>
        <dbReference type="UniProtKB" id="P17095"/>
    </source>
</evidence>
<evidence type="ECO:0000250" key="3">
    <source>
        <dbReference type="UniProtKB" id="P17096"/>
    </source>
</evidence>
<evidence type="ECO:0000256" key="4">
    <source>
        <dbReference type="SAM" id="MobiDB-lite"/>
    </source>
</evidence>
<evidence type="ECO:0000303" key="5">
    <source ref="1"/>
</evidence>
<evidence type="ECO:0000305" key="6"/>
<reference key="1">
    <citation type="submission" date="1999-12" db="EMBL/GenBank/DDBJ databases">
        <title>HMG-I(Y) proteins implicated in amplification of CHO cell DNA.</title>
        <authorList>
            <person name="Aldrich T.L."/>
            <person name="Reeves R."/>
            <person name="Lee C.C."/>
            <person name="Thomas J.N."/>
            <person name="Morris A.E."/>
        </authorList>
    </citation>
    <scope>NUCLEOTIDE SEQUENCE [MRNA] (ISOFORMS HMG-I AND HMG-Y)</scope>
</reference>
<gene>
    <name type="primary">HMGA1</name>
    <name type="synonym">HMGIY</name>
</gene>
<dbReference type="EMBL" id="AF193762">
    <property type="protein sequence ID" value="AAF06666.2"/>
    <property type="molecule type" value="mRNA"/>
</dbReference>
<dbReference type="EMBL" id="AF193763">
    <property type="protein sequence ID" value="AAF06667.2"/>
    <property type="molecule type" value="mRNA"/>
</dbReference>
<dbReference type="RefSeq" id="NP_001230957.1">
    <molecule id="Q9QXP3-1"/>
    <property type="nucleotide sequence ID" value="NM_001244028.1"/>
</dbReference>
<dbReference type="RefSeq" id="XP_007644977.1">
    <molecule id="Q9QXP3-1"/>
    <property type="nucleotide sequence ID" value="XM_007646787.2"/>
</dbReference>
<dbReference type="RefSeq" id="XP_007644984.1">
    <molecule id="Q9QXP3-2"/>
    <property type="nucleotide sequence ID" value="XM_007646794.2"/>
</dbReference>
<dbReference type="BMRB" id="Q9QXP3"/>
<dbReference type="PaxDb" id="10029-NP_001230957.1"/>
<dbReference type="Ensembl" id="ENSCGRT00001002870.1">
    <molecule id="Q9QXP3-1"/>
    <property type="protein sequence ID" value="ENSCGRP00001002230.1"/>
    <property type="gene ID" value="ENSCGRG00001002340.1"/>
</dbReference>
<dbReference type="GeneID" id="100689040"/>
<dbReference type="KEGG" id="cge:100689040"/>
<dbReference type="CTD" id="3159"/>
<dbReference type="eggNOG" id="ENOG502S5JW">
    <property type="taxonomic scope" value="Eukaryota"/>
</dbReference>
<dbReference type="GeneTree" id="ENSGT00730000111329"/>
<dbReference type="OMA" id="FLFQFCE"/>
<dbReference type="Proteomes" id="UP000694386">
    <property type="component" value="Unplaced"/>
</dbReference>
<dbReference type="Proteomes" id="UP001108280">
    <property type="component" value="Chromosome 1"/>
</dbReference>
<dbReference type="GO" id="GO:0005634">
    <property type="term" value="C:nucleus"/>
    <property type="evidence" value="ECO:0000250"/>
    <property type="project" value="UniProtKB"/>
</dbReference>
<dbReference type="GO" id="GO:0035985">
    <property type="term" value="C:senescence-associated heterochromatin focus"/>
    <property type="evidence" value="ECO:0000250"/>
    <property type="project" value="UniProtKB"/>
</dbReference>
<dbReference type="GO" id="GO:0003677">
    <property type="term" value="F:DNA binding"/>
    <property type="evidence" value="ECO:0007669"/>
    <property type="project" value="UniProtKB-KW"/>
</dbReference>
<dbReference type="GO" id="GO:0042974">
    <property type="term" value="F:nuclear retinoic acid receptor binding"/>
    <property type="evidence" value="ECO:0000250"/>
    <property type="project" value="UniProtKB"/>
</dbReference>
<dbReference type="GO" id="GO:0046965">
    <property type="term" value="F:nuclear retinoid X receptor binding"/>
    <property type="evidence" value="ECO:0000250"/>
    <property type="project" value="UniProtKB"/>
</dbReference>
<dbReference type="GO" id="GO:0042975">
    <property type="term" value="F:peroxisome proliferator activated receptor binding"/>
    <property type="evidence" value="ECO:0000250"/>
    <property type="project" value="UniProtKB"/>
</dbReference>
<dbReference type="GO" id="GO:0003713">
    <property type="term" value="F:transcription coactivator activity"/>
    <property type="evidence" value="ECO:0000250"/>
    <property type="project" value="UniProtKB"/>
</dbReference>
<dbReference type="GO" id="GO:0001221">
    <property type="term" value="F:transcription coregulator binding"/>
    <property type="evidence" value="ECO:0000250"/>
    <property type="project" value="UniProtKB"/>
</dbReference>
<dbReference type="GO" id="GO:0008285">
    <property type="term" value="P:negative regulation of cell population proliferation"/>
    <property type="evidence" value="ECO:0000250"/>
    <property type="project" value="UniProtKB"/>
</dbReference>
<dbReference type="GO" id="GO:0045892">
    <property type="term" value="P:negative regulation of DNA-templated transcription"/>
    <property type="evidence" value="ECO:0000250"/>
    <property type="project" value="UniProtKB"/>
</dbReference>
<dbReference type="GO" id="GO:0090402">
    <property type="term" value="P:oncogene-induced cell senescence"/>
    <property type="evidence" value="ECO:0000250"/>
    <property type="project" value="UniProtKB"/>
</dbReference>
<dbReference type="GO" id="GO:0045893">
    <property type="term" value="P:positive regulation of DNA-templated transcription"/>
    <property type="evidence" value="ECO:0000250"/>
    <property type="project" value="UniProtKB"/>
</dbReference>
<dbReference type="InterPro" id="IPR017956">
    <property type="entry name" value="AT_hook_DNA-bd_motif"/>
</dbReference>
<dbReference type="InterPro" id="IPR000116">
    <property type="entry name" value="HMGA"/>
</dbReference>
<dbReference type="InterPro" id="IPR000637">
    <property type="entry name" value="HMGI/Y_DNA-bd_CS"/>
</dbReference>
<dbReference type="PANTHER" id="PTHR23341:SF1">
    <property type="entry name" value="HIGH MOBILITY GROUP PROTEIN HMG-I_HMG-Y"/>
    <property type="match status" value="1"/>
</dbReference>
<dbReference type="PANTHER" id="PTHR23341">
    <property type="entry name" value="HIGH MOBILITY GROUP PROTEINS HMG-A AND C"/>
    <property type="match status" value="1"/>
</dbReference>
<dbReference type="PRINTS" id="PR00929">
    <property type="entry name" value="ATHOOK"/>
</dbReference>
<dbReference type="PRINTS" id="PR00930">
    <property type="entry name" value="HIGHMOBLTYIY"/>
</dbReference>
<dbReference type="SMART" id="SM00384">
    <property type="entry name" value="AT_hook"/>
    <property type="match status" value="3"/>
</dbReference>
<dbReference type="PROSITE" id="PS00354">
    <property type="entry name" value="HMGI_Y"/>
    <property type="match status" value="3"/>
</dbReference>
<feature type="initiator methionine" description="Removed" evidence="2">
    <location>
        <position position="1"/>
    </location>
</feature>
<feature type="chain" id="PRO_0000206707" description="High mobility group protein HMG-I/HMG-Y">
    <location>
        <begin position="2"/>
        <end position="107"/>
    </location>
</feature>
<feature type="DNA-binding region" description="A.T hook 1">
    <location>
        <begin position="21"/>
        <end position="31"/>
    </location>
</feature>
<feature type="DNA-binding region" description="A.T hook 2">
    <location>
        <begin position="53"/>
        <end position="63"/>
    </location>
</feature>
<feature type="DNA-binding region" description="A.T hook 3">
    <location>
        <begin position="78"/>
        <end position="89"/>
    </location>
</feature>
<feature type="region of interest" description="Disordered" evidence="4">
    <location>
        <begin position="1"/>
        <end position="107"/>
    </location>
</feature>
<feature type="region of interest" description="Interaction with HIPK2" evidence="1">
    <location>
        <begin position="53"/>
        <end position="77"/>
    </location>
</feature>
<feature type="compositionally biased region" description="Basic and acidic residues" evidence="4">
    <location>
        <begin position="15"/>
        <end position="24"/>
    </location>
</feature>
<feature type="compositionally biased region" description="Basic residues" evidence="4">
    <location>
        <begin position="55"/>
        <end position="74"/>
    </location>
</feature>
<feature type="compositionally biased region" description="Acidic residues" evidence="4">
    <location>
        <begin position="93"/>
        <end position="107"/>
    </location>
</feature>
<feature type="modified residue" description="N-acetylserine" evidence="2">
    <location>
        <position position="2"/>
    </location>
</feature>
<feature type="modified residue" description="N6-acetyllysine" evidence="2">
    <location>
        <position position="7"/>
    </location>
</feature>
<feature type="modified residue" description="ADP-ribosylserine" evidence="3">
    <location>
        <position position="8"/>
    </location>
</feature>
<feature type="modified residue" description="ADP-ribosylserine; alternate" evidence="3">
    <location>
        <position position="9"/>
    </location>
</feature>
<feature type="modified residue" description="Phosphoserine; alternate" evidence="3">
    <location>
        <position position="9"/>
    </location>
</feature>
<feature type="modified residue" description="N6-acetyllysine; alternate" evidence="3">
    <location>
        <position position="15"/>
    </location>
</feature>
<feature type="modified residue" description="Asymmetric dimethylarginine; alternate" evidence="3">
    <location>
        <position position="26"/>
    </location>
</feature>
<feature type="modified residue" description="Omega-N-methylarginine; alternate" evidence="3">
    <location>
        <position position="26"/>
    </location>
</feature>
<feature type="modified residue" description="Symmetric dimethylarginine; alternate" evidence="3">
    <location>
        <position position="26"/>
    </location>
</feature>
<feature type="modified residue" description="Phosphoserine; by HIPK2 and CDC2" evidence="3">
    <location>
        <position position="36"/>
    </location>
</feature>
<feature type="modified residue" description="Phosphothreonine" evidence="3">
    <location>
        <position position="39"/>
    </location>
</feature>
<feature type="modified residue" description="Phosphoserine" evidence="3">
    <location>
        <position position="44"/>
    </location>
</feature>
<feature type="modified residue" description="Phosphoserine" evidence="3">
    <location>
        <position position="49"/>
    </location>
</feature>
<feature type="modified residue" description="Phosphothreonine; by HIPK2 and CDC2" evidence="3">
    <location>
        <position position="53"/>
    </location>
</feature>
<feature type="modified residue" description="Asymmetric dimethylarginine; by PRMT6; alternate" evidence="3">
    <location>
        <position position="58"/>
    </location>
</feature>
<feature type="modified residue" description="Omega-N-methylarginine; by PRMT6; alternate" evidence="3">
    <location>
        <position position="58"/>
    </location>
</feature>
<feature type="modified residue" description="Asymmetric dimethylarginine; by PRMT6; alternate" evidence="3">
    <location>
        <position position="60"/>
    </location>
</feature>
<feature type="modified residue" description="Omega-N-methylarginine; by PRMT6; alternate" evidence="3">
    <location>
        <position position="60"/>
    </location>
</feature>
<feature type="modified residue" description="Phosphoserine" evidence="3">
    <location>
        <position position="99"/>
    </location>
</feature>
<feature type="modified residue" description="Phosphoserine" evidence="3">
    <location>
        <position position="102"/>
    </location>
</feature>
<feature type="modified residue" description="Phosphoserine" evidence="3">
    <location>
        <position position="103"/>
    </location>
</feature>
<feature type="cross-link" description="Glycyl lysine isopeptide (Lys-Gly) (interchain with G-Cter in SUMO2); alternate" evidence="3">
    <location>
        <position position="15"/>
    </location>
</feature>
<feature type="splice variant" id="VSP_002181" description="In isoform HMG-Y." evidence="5">
    <location>
        <begin position="35"/>
        <end position="45"/>
    </location>
</feature>
<organism>
    <name type="scientific">Cricetulus griseus</name>
    <name type="common">Chinese hamster</name>
    <name type="synonym">Cricetulus barabensis griseus</name>
    <dbReference type="NCBI Taxonomy" id="10029"/>
    <lineage>
        <taxon>Eukaryota</taxon>
        <taxon>Metazoa</taxon>
        <taxon>Chordata</taxon>
        <taxon>Craniata</taxon>
        <taxon>Vertebrata</taxon>
        <taxon>Euteleostomi</taxon>
        <taxon>Mammalia</taxon>
        <taxon>Eutheria</taxon>
        <taxon>Euarchontoglires</taxon>
        <taxon>Glires</taxon>
        <taxon>Rodentia</taxon>
        <taxon>Myomorpha</taxon>
        <taxon>Muroidea</taxon>
        <taxon>Cricetidae</taxon>
        <taxon>Cricetinae</taxon>
        <taxon>Cricetulus</taxon>
    </lineage>
</organism>
<name>HMGA1_CRIGR</name>
<protein>
    <recommendedName>
        <fullName>High mobility group protein HMG-I/HMG-Y</fullName>
        <shortName>HMG-I(Y)</shortName>
    </recommendedName>
    <alternativeName>
        <fullName>High mobility group AT-hook protein 1</fullName>
        <shortName>High mobility group protein A1</shortName>
    </alternativeName>
</protein>
<comment type="function">
    <text evidence="1">HMG-I/Y bind preferentially to the minor groove of A+T rich regions in double-stranded DNA. It is suggested that these proteins could function in nucleosome phasing and in the 3'-end processing of mRNA transcripts. They are also involved in the transcription regulation of genes containing, or in close proximity to A+T-rich regions (By similarity).</text>
</comment>
<comment type="subunit">
    <text evidence="1">Interacts with HIPK2.</text>
</comment>
<comment type="subcellular location">
    <subcellularLocation>
        <location>Nucleus</location>
    </subcellularLocation>
    <subcellularLocation>
        <location>Chromosome</location>
    </subcellularLocation>
</comment>
<comment type="alternative products">
    <event type="alternative splicing"/>
    <isoform>
        <id>Q9QXP3-1</id>
        <name>HMG-I</name>
        <name>HMGA1a</name>
        <sequence type="displayed"/>
    </isoform>
    <isoform>
        <id>Q9QXP3-2</id>
        <name>HMG-Y</name>
        <name>HMGA1b</name>
        <sequence type="described" ref="VSP_002181"/>
    </isoform>
</comment>
<comment type="PTM">
    <text evidence="1">Isoforms HMG-I and HMG-Y can be phosphorylated by HIPK2. Phosphorylation may modulate DNA-binding affinity (By similarity).</text>
</comment>
<comment type="PTM">
    <text evidence="1">Methylation at Arg-58 is mutually exclusive with methylation at Arg-60.</text>
</comment>
<comment type="similarity">
    <text evidence="6">Belongs to the HMGA family.</text>
</comment>